<gene>
    <name type="primary">SLD7</name>
    <name type="ORF">SCRG_01459</name>
</gene>
<dbReference type="EMBL" id="CH408045">
    <property type="protein sequence ID" value="EDV10662.1"/>
    <property type="molecule type" value="Genomic_DNA"/>
</dbReference>
<dbReference type="SMR" id="B3LJA9"/>
<dbReference type="HOGENOM" id="CLU_072105_0_0_1"/>
<dbReference type="OrthoDB" id="34738at4893"/>
<dbReference type="Proteomes" id="UP000008335">
    <property type="component" value="Unassembled WGS sequence"/>
</dbReference>
<dbReference type="GO" id="GO:0005737">
    <property type="term" value="C:cytoplasm"/>
    <property type="evidence" value="ECO:0007669"/>
    <property type="project" value="UniProtKB-KW"/>
</dbReference>
<dbReference type="GO" id="GO:0005634">
    <property type="term" value="C:nucleus"/>
    <property type="evidence" value="ECO:0007669"/>
    <property type="project" value="UniProtKB-SubCell"/>
</dbReference>
<dbReference type="GO" id="GO:0000922">
    <property type="term" value="C:spindle pole"/>
    <property type="evidence" value="ECO:0007669"/>
    <property type="project" value="UniProtKB-SubCell"/>
</dbReference>
<dbReference type="GO" id="GO:0006260">
    <property type="term" value="P:DNA replication"/>
    <property type="evidence" value="ECO:0007669"/>
    <property type="project" value="UniProtKB-KW"/>
</dbReference>
<dbReference type="GO" id="GO:0030174">
    <property type="term" value="P:regulation of DNA-templated DNA replication initiation"/>
    <property type="evidence" value="ECO:0007669"/>
    <property type="project" value="InterPro"/>
</dbReference>
<dbReference type="InterPro" id="IPR016808">
    <property type="entry name" value="Sld7"/>
</dbReference>
<dbReference type="InterPro" id="IPR041260">
    <property type="entry name" value="Sld7_C"/>
</dbReference>
<dbReference type="InterPro" id="IPR041564">
    <property type="entry name" value="Sld7_N"/>
</dbReference>
<dbReference type="Pfam" id="PF18596">
    <property type="entry name" value="Sld7_C"/>
    <property type="match status" value="1"/>
</dbReference>
<dbReference type="Pfam" id="PF18636">
    <property type="entry name" value="Sld7_N"/>
    <property type="match status" value="1"/>
</dbReference>
<dbReference type="PIRSF" id="PIRSF022788">
    <property type="entry name" value="UCP022788"/>
    <property type="match status" value="1"/>
</dbReference>
<keyword id="KW-0131">Cell cycle</keyword>
<keyword id="KW-0963">Cytoplasm</keyword>
<keyword id="KW-0206">Cytoskeleton</keyword>
<keyword id="KW-0235">DNA replication</keyword>
<keyword id="KW-0539">Nucleus</keyword>
<organism>
    <name type="scientific">Saccharomyces cerevisiae (strain RM11-1a)</name>
    <name type="common">Baker's yeast</name>
    <dbReference type="NCBI Taxonomy" id="285006"/>
    <lineage>
        <taxon>Eukaryota</taxon>
        <taxon>Fungi</taxon>
        <taxon>Dikarya</taxon>
        <taxon>Ascomycota</taxon>
        <taxon>Saccharomycotina</taxon>
        <taxon>Saccharomycetes</taxon>
        <taxon>Saccharomycetales</taxon>
        <taxon>Saccharomycetaceae</taxon>
        <taxon>Saccharomyces</taxon>
    </lineage>
</organism>
<reference key="1">
    <citation type="submission" date="2005-03" db="EMBL/GenBank/DDBJ databases">
        <title>Annotation of the Saccharomyces cerevisiae RM11-1a genome.</title>
        <authorList>
            <consortium name="The Broad Institute Genome Sequencing Platform"/>
            <person name="Birren B.W."/>
            <person name="Lander E.S."/>
            <person name="Galagan J.E."/>
            <person name="Nusbaum C."/>
            <person name="Devon K."/>
            <person name="Cuomo C."/>
            <person name="Jaffe D.B."/>
            <person name="Butler J."/>
            <person name="Alvarez P."/>
            <person name="Gnerre S."/>
            <person name="Grabherr M."/>
            <person name="Kleber M."/>
            <person name="Mauceli E.W."/>
            <person name="Brockman W."/>
            <person name="MacCallum I.A."/>
            <person name="Rounsley S."/>
            <person name="Young S.K."/>
            <person name="LaButti K."/>
            <person name="Pushparaj V."/>
            <person name="DeCaprio D."/>
            <person name="Crawford M."/>
            <person name="Koehrsen M."/>
            <person name="Engels R."/>
            <person name="Montgomery P."/>
            <person name="Pearson M."/>
            <person name="Howarth C."/>
            <person name="Larson L."/>
            <person name="Luoma S."/>
            <person name="White J."/>
            <person name="O'Leary S."/>
            <person name="Kodira C.D."/>
            <person name="Zeng Q."/>
            <person name="Yandava C."/>
            <person name="Alvarado L."/>
            <person name="Pratt S."/>
            <person name="Kruglyak L."/>
        </authorList>
    </citation>
    <scope>NUCLEOTIDE SEQUENCE [LARGE SCALE GENOMIC DNA]</scope>
    <source>
        <strain>RM11-1a</strain>
    </source>
</reference>
<protein>
    <recommendedName>
        <fullName>Mitochondrial morphogenesis protein SLD7</fullName>
    </recommendedName>
    <alternativeName>
        <fullName>Synthetic lethality with DPB11-24 mutation protein 7</fullName>
    </alternativeName>
</protein>
<comment type="function">
    <text evidence="1">Required for the proper function of SLD3 at the initiation of DNA replication. Binds to SLD3 and reduces its affinity for CDC45, a component of the replication fork. Required for mitochondrial morphology (By similarity).</text>
</comment>
<comment type="subunit">
    <text evidence="1">Interacts with SLD3.</text>
</comment>
<comment type="subcellular location">
    <subcellularLocation>
        <location evidence="1">Nucleus</location>
    </subcellularLocation>
    <subcellularLocation>
        <location evidence="1">Cytoplasm</location>
        <location evidence="1">Cytoskeleton</location>
        <location evidence="1">Spindle pole</location>
    </subcellularLocation>
</comment>
<comment type="similarity">
    <text evidence="2">Belongs to the SLD7 family.</text>
</comment>
<proteinExistence type="inferred from homology"/>
<name>SLD7_YEAS1</name>
<sequence>MSRKLCTLNFTLSGKQGSLVIRDIQLWSNRPTASKSTSELRGQFIQYVDLAKLPLWVRSTNMNTYRCYSTSATAQAYFKSKLRNANRGIVIELSDKVDQRSQEPAYLIIFRENTELNCFQVDLTMKHEFDGQVTKLKQEIGKTRASVSKEGSIDIIIQQSQQRKIGTKTKVYRNVHINDKRLQFNETLSKLILGGLRLRGISNSITDYQKLYKVTFDAAEFTHRDELKRISMGSGEEVSFESLQETVETLLKLFTKS</sequence>
<feature type="chain" id="PRO_0000411029" description="Mitochondrial morphogenesis protein SLD7">
    <location>
        <begin position="1"/>
        <end position="257"/>
    </location>
</feature>
<accession>B3LJA9</accession>
<evidence type="ECO:0000250" key="1"/>
<evidence type="ECO:0000305" key="2"/>